<organism>
    <name type="scientific">Capsella bursa-pastoris</name>
    <name type="common">Shepherd's purse</name>
    <name type="synonym">Thlaspi bursa-pastoris</name>
    <dbReference type="NCBI Taxonomy" id="3719"/>
    <lineage>
        <taxon>Eukaryota</taxon>
        <taxon>Viridiplantae</taxon>
        <taxon>Streptophyta</taxon>
        <taxon>Embryophyta</taxon>
        <taxon>Tracheophyta</taxon>
        <taxon>Spermatophyta</taxon>
        <taxon>Magnoliopsida</taxon>
        <taxon>eudicotyledons</taxon>
        <taxon>Gunneridae</taxon>
        <taxon>Pentapetalae</taxon>
        <taxon>rosids</taxon>
        <taxon>malvids</taxon>
        <taxon>Brassicales</taxon>
        <taxon>Brassicaceae</taxon>
        <taxon>Camelineae</taxon>
        <taxon>Capsella</taxon>
    </lineage>
</organism>
<proteinExistence type="evidence at protein level"/>
<reference key="1">
    <citation type="book" date="1977" name="Plant biochemistry II">
        <editorList>
            <person name="Northcote D.H."/>
        </editorList>
        <authorList>
            <person name="Boulter D."/>
            <person name="Haslett B.G."/>
            <person name="Peacock D."/>
            <person name="Ramshaw J.A.M."/>
            <person name="Scawen M.D."/>
        </authorList>
    </citation>
    <scope>PROTEIN SEQUENCE</scope>
    <scope>SUBCELLULAR LOCATION</scope>
</reference>
<protein>
    <recommendedName>
        <fullName>Plastocyanin</fullName>
    </recommendedName>
</protein>
<gene>
    <name type="primary">PETE</name>
</gene>
<feature type="chain" id="PRO_0000085560" description="Plastocyanin">
    <location>
        <begin position="1"/>
        <end position="99"/>
    </location>
</feature>
<feature type="domain" description="Plastocyanin-like">
    <location>
        <begin position="1"/>
        <end position="99"/>
    </location>
</feature>
<feature type="binding site" evidence="1">
    <location>
        <position position="37"/>
    </location>
    <ligand>
        <name>Cu cation</name>
        <dbReference type="ChEBI" id="CHEBI:23378"/>
    </ligand>
</feature>
<feature type="binding site" evidence="1">
    <location>
        <position position="84"/>
    </location>
    <ligand>
        <name>Cu cation</name>
        <dbReference type="ChEBI" id="CHEBI:23378"/>
    </ligand>
</feature>
<feature type="binding site" evidence="1">
    <location>
        <position position="87"/>
    </location>
    <ligand>
        <name>Cu cation</name>
        <dbReference type="ChEBI" id="CHEBI:23378"/>
    </ligand>
</feature>
<feature type="binding site" evidence="1">
    <location>
        <position position="92"/>
    </location>
    <ligand>
        <name>Cu cation</name>
        <dbReference type="ChEBI" id="CHEBI:23378"/>
    </ligand>
</feature>
<evidence type="ECO:0000250" key="1">
    <source>
        <dbReference type="UniProtKB" id="P18068"/>
    </source>
</evidence>
<evidence type="ECO:0000269" key="2">
    <source ref="1"/>
</evidence>
<evidence type="ECO:0000305" key="3"/>
<keyword id="KW-0150">Chloroplast</keyword>
<keyword id="KW-0186">Copper</keyword>
<keyword id="KW-0903">Direct protein sequencing</keyword>
<keyword id="KW-0249">Electron transport</keyword>
<keyword id="KW-0472">Membrane</keyword>
<keyword id="KW-0479">Metal-binding</keyword>
<keyword id="KW-0934">Plastid</keyword>
<keyword id="KW-0793">Thylakoid</keyword>
<keyword id="KW-0813">Transport</keyword>
<comment type="function">
    <text>Participates in electron transfer between P700 and the cytochrome b6-f complex in photosystem I.</text>
</comment>
<comment type="cofactor">
    <cofactor evidence="1">
        <name>Cu(2+)</name>
        <dbReference type="ChEBI" id="CHEBI:29036"/>
    </cofactor>
</comment>
<comment type="subcellular location">
    <subcellularLocation>
        <location evidence="2">Plastid</location>
        <location evidence="2">Chloroplast thylakoid membrane</location>
        <topology evidence="3">Peripheral membrane protein</topology>
        <orientation evidence="3">Lumenal side</orientation>
    </subcellularLocation>
    <text>Loosely bound to the inner thylakoid membrane surface in chloroplasts (Probable).</text>
</comment>
<comment type="similarity">
    <text evidence="3">Belongs to the plastocyanin family.</text>
</comment>
<accession>P00294</accession>
<dbReference type="PIR" id="A00304">
    <property type="entry name" value="CUSU"/>
</dbReference>
<dbReference type="SMR" id="P00294"/>
<dbReference type="GO" id="GO:0009543">
    <property type="term" value="C:chloroplast thylakoid lumen"/>
    <property type="evidence" value="ECO:0007669"/>
    <property type="project" value="TreeGrafter"/>
</dbReference>
<dbReference type="GO" id="GO:0009535">
    <property type="term" value="C:chloroplast thylakoid membrane"/>
    <property type="evidence" value="ECO:0007669"/>
    <property type="project" value="UniProtKB-SubCell"/>
</dbReference>
<dbReference type="GO" id="GO:0005507">
    <property type="term" value="F:copper ion binding"/>
    <property type="evidence" value="ECO:0007669"/>
    <property type="project" value="InterPro"/>
</dbReference>
<dbReference type="GO" id="GO:0046028">
    <property type="term" value="F:electron transporter, transferring electrons from cytochrome b6/f complex of photosystem II activity"/>
    <property type="evidence" value="ECO:0007669"/>
    <property type="project" value="TreeGrafter"/>
</dbReference>
<dbReference type="CDD" id="cd04219">
    <property type="entry name" value="Plastocyanin"/>
    <property type="match status" value="1"/>
</dbReference>
<dbReference type="Gene3D" id="2.60.40.420">
    <property type="entry name" value="Cupredoxins - blue copper proteins"/>
    <property type="match status" value="1"/>
</dbReference>
<dbReference type="InterPro" id="IPR000923">
    <property type="entry name" value="BlueCu_1"/>
</dbReference>
<dbReference type="InterPro" id="IPR028871">
    <property type="entry name" value="BlueCu_1_BS"/>
</dbReference>
<dbReference type="InterPro" id="IPR001235">
    <property type="entry name" value="Copper_blue_Plastocyanin"/>
</dbReference>
<dbReference type="InterPro" id="IPR008972">
    <property type="entry name" value="Cupredoxin"/>
</dbReference>
<dbReference type="InterPro" id="IPR002387">
    <property type="entry name" value="Plastocyanin"/>
</dbReference>
<dbReference type="NCBIfam" id="TIGR02656">
    <property type="entry name" value="cyanin_plasto"/>
    <property type="match status" value="1"/>
</dbReference>
<dbReference type="PANTHER" id="PTHR34192">
    <property type="entry name" value="PLASTOCYANIN MAJOR ISOFORM, CHLOROPLASTIC-RELATED"/>
    <property type="match status" value="1"/>
</dbReference>
<dbReference type="PANTHER" id="PTHR34192:SF10">
    <property type="entry name" value="PLASTOCYANIN MAJOR ISOFORM, CHLOROPLASTIC-RELATED"/>
    <property type="match status" value="1"/>
</dbReference>
<dbReference type="Pfam" id="PF00127">
    <property type="entry name" value="Copper-bind"/>
    <property type="match status" value="1"/>
</dbReference>
<dbReference type="PRINTS" id="PR00156">
    <property type="entry name" value="COPPERBLUE"/>
</dbReference>
<dbReference type="PRINTS" id="PR00157">
    <property type="entry name" value="PLASTOCYANIN"/>
</dbReference>
<dbReference type="SUPFAM" id="SSF49503">
    <property type="entry name" value="Cupredoxins"/>
    <property type="match status" value="1"/>
</dbReference>
<dbReference type="PROSITE" id="PS00196">
    <property type="entry name" value="COPPER_BLUE"/>
    <property type="match status" value="1"/>
</dbReference>
<sequence length="99" mass="10384">IEVLLGGGDGSLAFVPNDFSIAKGEKIVFKNNAGFPHNVVFDEDEIPSGVDASKISMDENDLLNAAGETYEVALTEAGTYSFYCAPHQGAGMVGKVTVN</sequence>
<name>PLAS_CAPBU</name>